<evidence type="ECO:0000255" key="1">
    <source>
        <dbReference type="HAMAP-Rule" id="MF_00690"/>
    </source>
</evidence>
<feature type="chain" id="PRO_1000045181" description="UPF0270 protein YPA_3293">
    <location>
        <begin position="1"/>
        <end position="78"/>
    </location>
</feature>
<organism>
    <name type="scientific">Yersinia pestis bv. Antiqua (strain Antiqua)</name>
    <dbReference type="NCBI Taxonomy" id="360102"/>
    <lineage>
        <taxon>Bacteria</taxon>
        <taxon>Pseudomonadati</taxon>
        <taxon>Pseudomonadota</taxon>
        <taxon>Gammaproteobacteria</taxon>
        <taxon>Enterobacterales</taxon>
        <taxon>Yersiniaceae</taxon>
        <taxon>Yersinia</taxon>
    </lineage>
</organism>
<dbReference type="EMBL" id="CP000308">
    <property type="protein sequence ID" value="ABG15255.1"/>
    <property type="molecule type" value="Genomic_DNA"/>
</dbReference>
<dbReference type="RefSeq" id="WP_002212301.1">
    <property type="nucleotide sequence ID" value="NZ_CP009906.1"/>
</dbReference>
<dbReference type="SMR" id="Q1C2R7"/>
<dbReference type="KEGG" id="ypa:YPA_3293"/>
<dbReference type="Proteomes" id="UP000001971">
    <property type="component" value="Chromosome"/>
</dbReference>
<dbReference type="Gene3D" id="1.10.10.610">
    <property type="entry name" value="YehU-like"/>
    <property type="match status" value="1"/>
</dbReference>
<dbReference type="HAMAP" id="MF_00690">
    <property type="entry name" value="UPF0270"/>
    <property type="match status" value="1"/>
</dbReference>
<dbReference type="InterPro" id="IPR010648">
    <property type="entry name" value="UPF0270"/>
</dbReference>
<dbReference type="InterPro" id="IPR036685">
    <property type="entry name" value="YehU-like_sf"/>
</dbReference>
<dbReference type="NCBIfam" id="NF003438">
    <property type="entry name" value="PRK04966.1"/>
    <property type="match status" value="1"/>
</dbReference>
<dbReference type="Pfam" id="PF06794">
    <property type="entry name" value="UPF0270"/>
    <property type="match status" value="1"/>
</dbReference>
<dbReference type="PIRSF" id="PIRSF006169">
    <property type="entry name" value="UCP006169"/>
    <property type="match status" value="1"/>
</dbReference>
<dbReference type="SUPFAM" id="SSF118001">
    <property type="entry name" value="YehU-like"/>
    <property type="match status" value="1"/>
</dbReference>
<protein>
    <recommendedName>
        <fullName evidence="1">UPF0270 protein YPA_3293</fullName>
    </recommendedName>
</protein>
<comment type="similarity">
    <text evidence="1">Belongs to the UPF0270 family.</text>
</comment>
<accession>Q1C2R7</accession>
<name>Y3293_YERPA</name>
<gene>
    <name type="ordered locus">YPA_3293</name>
</gene>
<reference key="1">
    <citation type="journal article" date="2006" name="J. Bacteriol.">
        <title>Complete genome sequence of Yersinia pestis strains Antiqua and Nepal516: evidence of gene reduction in an emerging pathogen.</title>
        <authorList>
            <person name="Chain P.S.G."/>
            <person name="Hu P."/>
            <person name="Malfatti S.A."/>
            <person name="Radnedge L."/>
            <person name="Larimer F."/>
            <person name="Vergez L.M."/>
            <person name="Worsham P."/>
            <person name="Chu M.C."/>
            <person name="Andersen G.L."/>
        </authorList>
    </citation>
    <scope>NUCLEOTIDE SEQUENCE [LARGE SCALE GENOMIC DNA]</scope>
    <source>
        <strain>Antiqua</strain>
    </source>
</reference>
<sequence length="78" mass="8926">MIIPWQQVDSETLDNLLEAFVLREGTDYGEHERSLTEKVADVRRQLVSGEAVLVWSELHETINIMPRGSFRAGAEEQQ</sequence>
<proteinExistence type="inferred from homology"/>